<protein>
    <recommendedName>
        <fullName evidence="1">Uridylate kinase</fullName>
        <shortName evidence="1">UK</shortName>
        <ecNumber evidence="1">2.7.4.22</ecNumber>
    </recommendedName>
    <alternativeName>
        <fullName evidence="1">Uridine monophosphate kinase</fullName>
        <shortName evidence="1">UMP kinase</shortName>
        <shortName evidence="1">UMPK</shortName>
    </alternativeName>
</protein>
<accession>Q0RBL9</accession>
<sequence length="256" mass="27257">MAKYRRVVVKLSGRAIAGSAEFGFDSNALEHLAREIIAVRQSGVEVAIVVGGGNLFRGNQSDRWGIDRVEADNIGMLGTVINSLLLRGKLTALGEDNLRVMTAVPVPAVAEPYIRLRAVHLLEKGATVILACGNGQPFLTTDYPAVQRALELGADAVLAAKDGVDGVYDSDPKINPEAQRFSRLSYDEVISRGLRVMDQSAFILARDFGIPLHIFDIEQQGAMTAICRGEHRGTVIDTTGGKAGSAALASSAETVV</sequence>
<name>PYRH_FRAAA</name>
<organism>
    <name type="scientific">Frankia alni (strain DSM 45986 / CECT 9034 / ACN14a)</name>
    <dbReference type="NCBI Taxonomy" id="326424"/>
    <lineage>
        <taxon>Bacteria</taxon>
        <taxon>Bacillati</taxon>
        <taxon>Actinomycetota</taxon>
        <taxon>Actinomycetes</taxon>
        <taxon>Frankiales</taxon>
        <taxon>Frankiaceae</taxon>
        <taxon>Frankia</taxon>
    </lineage>
</organism>
<dbReference type="EC" id="2.7.4.22" evidence="1"/>
<dbReference type="EMBL" id="CT573213">
    <property type="protein sequence ID" value="CAJ65165.1"/>
    <property type="status" value="ALT_INIT"/>
    <property type="molecule type" value="Genomic_DNA"/>
</dbReference>
<dbReference type="RefSeq" id="WP_011607582.1">
    <property type="nucleotide sequence ID" value="NC_008278.1"/>
</dbReference>
<dbReference type="SMR" id="Q0RBL9"/>
<dbReference type="STRING" id="326424.FRAAL6542"/>
<dbReference type="KEGG" id="fal:FRAAL6542"/>
<dbReference type="eggNOG" id="COG0528">
    <property type="taxonomic scope" value="Bacteria"/>
</dbReference>
<dbReference type="HOGENOM" id="CLU_033861_0_1_11"/>
<dbReference type="OrthoDB" id="9807458at2"/>
<dbReference type="UniPathway" id="UPA00159">
    <property type="reaction ID" value="UER00275"/>
</dbReference>
<dbReference type="Proteomes" id="UP000000657">
    <property type="component" value="Chromosome"/>
</dbReference>
<dbReference type="GO" id="GO:0005737">
    <property type="term" value="C:cytoplasm"/>
    <property type="evidence" value="ECO:0007669"/>
    <property type="project" value="UniProtKB-SubCell"/>
</dbReference>
<dbReference type="GO" id="GO:0005524">
    <property type="term" value="F:ATP binding"/>
    <property type="evidence" value="ECO:0007669"/>
    <property type="project" value="UniProtKB-KW"/>
</dbReference>
<dbReference type="GO" id="GO:0033862">
    <property type="term" value="F:UMP kinase activity"/>
    <property type="evidence" value="ECO:0007669"/>
    <property type="project" value="UniProtKB-EC"/>
</dbReference>
<dbReference type="GO" id="GO:0044210">
    <property type="term" value="P:'de novo' CTP biosynthetic process"/>
    <property type="evidence" value="ECO:0007669"/>
    <property type="project" value="UniProtKB-UniRule"/>
</dbReference>
<dbReference type="GO" id="GO:0006225">
    <property type="term" value="P:UDP biosynthetic process"/>
    <property type="evidence" value="ECO:0007669"/>
    <property type="project" value="TreeGrafter"/>
</dbReference>
<dbReference type="CDD" id="cd04254">
    <property type="entry name" value="AAK_UMPK-PyrH-Ec"/>
    <property type="match status" value="1"/>
</dbReference>
<dbReference type="FunFam" id="3.40.1160.10:FF:000001">
    <property type="entry name" value="Uridylate kinase"/>
    <property type="match status" value="1"/>
</dbReference>
<dbReference type="Gene3D" id="3.40.1160.10">
    <property type="entry name" value="Acetylglutamate kinase-like"/>
    <property type="match status" value="1"/>
</dbReference>
<dbReference type="HAMAP" id="MF_01220_B">
    <property type="entry name" value="PyrH_B"/>
    <property type="match status" value="1"/>
</dbReference>
<dbReference type="InterPro" id="IPR036393">
    <property type="entry name" value="AceGlu_kinase-like_sf"/>
</dbReference>
<dbReference type="InterPro" id="IPR001048">
    <property type="entry name" value="Asp/Glu/Uridylate_kinase"/>
</dbReference>
<dbReference type="InterPro" id="IPR011817">
    <property type="entry name" value="Uridylate_kinase"/>
</dbReference>
<dbReference type="InterPro" id="IPR015963">
    <property type="entry name" value="Uridylate_kinase_bac"/>
</dbReference>
<dbReference type="NCBIfam" id="TIGR02075">
    <property type="entry name" value="pyrH_bact"/>
    <property type="match status" value="1"/>
</dbReference>
<dbReference type="PANTHER" id="PTHR42833">
    <property type="entry name" value="URIDYLATE KINASE"/>
    <property type="match status" value="1"/>
</dbReference>
<dbReference type="PANTHER" id="PTHR42833:SF4">
    <property type="entry name" value="URIDYLATE KINASE PUMPKIN, CHLOROPLASTIC"/>
    <property type="match status" value="1"/>
</dbReference>
<dbReference type="Pfam" id="PF00696">
    <property type="entry name" value="AA_kinase"/>
    <property type="match status" value="1"/>
</dbReference>
<dbReference type="PIRSF" id="PIRSF005650">
    <property type="entry name" value="Uridylate_kin"/>
    <property type="match status" value="1"/>
</dbReference>
<dbReference type="SUPFAM" id="SSF53633">
    <property type="entry name" value="Carbamate kinase-like"/>
    <property type="match status" value="1"/>
</dbReference>
<feature type="chain" id="PRO_0000323855" description="Uridylate kinase">
    <location>
        <begin position="1"/>
        <end position="256"/>
    </location>
</feature>
<feature type="binding site" evidence="1">
    <location>
        <begin position="10"/>
        <end position="13"/>
    </location>
    <ligand>
        <name>ATP</name>
        <dbReference type="ChEBI" id="CHEBI:30616"/>
    </ligand>
</feature>
<feature type="binding site" evidence="1">
    <location>
        <position position="52"/>
    </location>
    <ligand>
        <name>UMP</name>
        <dbReference type="ChEBI" id="CHEBI:57865"/>
    </ligand>
</feature>
<feature type="binding site" evidence="1">
    <location>
        <position position="53"/>
    </location>
    <ligand>
        <name>ATP</name>
        <dbReference type="ChEBI" id="CHEBI:30616"/>
    </ligand>
</feature>
<feature type="binding site" evidence="1">
    <location>
        <position position="57"/>
    </location>
    <ligand>
        <name>ATP</name>
        <dbReference type="ChEBI" id="CHEBI:30616"/>
    </ligand>
</feature>
<feature type="binding site" evidence="1">
    <location>
        <position position="72"/>
    </location>
    <ligand>
        <name>UMP</name>
        <dbReference type="ChEBI" id="CHEBI:57865"/>
    </ligand>
</feature>
<feature type="binding site" evidence="1">
    <location>
        <begin position="134"/>
        <end position="141"/>
    </location>
    <ligand>
        <name>UMP</name>
        <dbReference type="ChEBI" id="CHEBI:57865"/>
    </ligand>
</feature>
<feature type="binding site" evidence="1">
    <location>
        <position position="168"/>
    </location>
    <ligand>
        <name>ATP</name>
        <dbReference type="ChEBI" id="CHEBI:30616"/>
    </ligand>
</feature>
<feature type="binding site" evidence="1">
    <location>
        <position position="171"/>
    </location>
    <ligand>
        <name>ATP</name>
        <dbReference type="ChEBI" id="CHEBI:30616"/>
    </ligand>
</feature>
<gene>
    <name evidence="1" type="primary">pyrH</name>
    <name type="ordered locus">FRAAL6542</name>
</gene>
<comment type="function">
    <text evidence="1">Catalyzes the reversible phosphorylation of UMP to UDP.</text>
</comment>
<comment type="catalytic activity">
    <reaction evidence="1">
        <text>UMP + ATP = UDP + ADP</text>
        <dbReference type="Rhea" id="RHEA:24400"/>
        <dbReference type="ChEBI" id="CHEBI:30616"/>
        <dbReference type="ChEBI" id="CHEBI:57865"/>
        <dbReference type="ChEBI" id="CHEBI:58223"/>
        <dbReference type="ChEBI" id="CHEBI:456216"/>
        <dbReference type="EC" id="2.7.4.22"/>
    </reaction>
</comment>
<comment type="activity regulation">
    <text evidence="1">Inhibited by UTP.</text>
</comment>
<comment type="pathway">
    <text evidence="1">Pyrimidine metabolism; CTP biosynthesis via de novo pathway; UDP from UMP (UMPK route): step 1/1.</text>
</comment>
<comment type="subunit">
    <text evidence="1">Homohexamer.</text>
</comment>
<comment type="subcellular location">
    <subcellularLocation>
        <location evidence="1">Cytoplasm</location>
    </subcellularLocation>
</comment>
<comment type="similarity">
    <text evidence="1">Belongs to the UMP kinase family.</text>
</comment>
<comment type="sequence caution" evidence="2">
    <conflict type="erroneous initiation">
        <sequence resource="EMBL-CDS" id="CAJ65165"/>
    </conflict>
</comment>
<reference key="1">
    <citation type="journal article" date="2007" name="Genome Res.">
        <title>Genome characteristics of facultatively symbiotic Frankia sp. strains reflect host range and host plant biogeography.</title>
        <authorList>
            <person name="Normand P."/>
            <person name="Lapierre P."/>
            <person name="Tisa L.S."/>
            <person name="Gogarten J.P."/>
            <person name="Alloisio N."/>
            <person name="Bagnarol E."/>
            <person name="Bassi C.A."/>
            <person name="Berry A.M."/>
            <person name="Bickhart D.M."/>
            <person name="Choisne N."/>
            <person name="Couloux A."/>
            <person name="Cournoyer B."/>
            <person name="Cruveiller S."/>
            <person name="Daubin V."/>
            <person name="Demange N."/>
            <person name="Francino M.P."/>
            <person name="Goltsman E."/>
            <person name="Huang Y."/>
            <person name="Kopp O.R."/>
            <person name="Labarre L."/>
            <person name="Lapidus A."/>
            <person name="Lavire C."/>
            <person name="Marechal J."/>
            <person name="Martinez M."/>
            <person name="Mastronunzio J.E."/>
            <person name="Mullin B.C."/>
            <person name="Niemann J."/>
            <person name="Pujic P."/>
            <person name="Rawnsley T."/>
            <person name="Rouy Z."/>
            <person name="Schenowitz C."/>
            <person name="Sellstedt A."/>
            <person name="Tavares F."/>
            <person name="Tomkins J.P."/>
            <person name="Vallenet D."/>
            <person name="Valverde C."/>
            <person name="Wall L.G."/>
            <person name="Wang Y."/>
            <person name="Medigue C."/>
            <person name="Benson D.R."/>
        </authorList>
    </citation>
    <scope>NUCLEOTIDE SEQUENCE [LARGE SCALE GENOMIC DNA]</scope>
    <source>
        <strain>DSM 45986 / CECT 9034 / ACN14a</strain>
    </source>
</reference>
<keyword id="KW-0067">ATP-binding</keyword>
<keyword id="KW-0963">Cytoplasm</keyword>
<keyword id="KW-0418">Kinase</keyword>
<keyword id="KW-0547">Nucleotide-binding</keyword>
<keyword id="KW-0665">Pyrimidine biosynthesis</keyword>
<keyword id="KW-1185">Reference proteome</keyword>
<keyword id="KW-0808">Transferase</keyword>
<proteinExistence type="inferred from homology"/>
<evidence type="ECO:0000255" key="1">
    <source>
        <dbReference type="HAMAP-Rule" id="MF_01220"/>
    </source>
</evidence>
<evidence type="ECO:0000305" key="2"/>